<comment type="function">
    <text evidence="2">Meiosis specific component of cohesin complex. The cohesin complex is required for the cohesion of sister chromatids after DNA replication. The cohesin complex apparently forms a large proteinaceous ring within which sister chromatids can be trapped. At anaphase, the complex is cleaved and dissociates from chromatin, allowing sister chromatids to segregate. The meiosis-specific cohesin complex probably replaces mitosis specific cohesin complex when it dissociates from chromatin during prophase I.</text>
</comment>
<comment type="subunit">
    <text evidence="1">Component of the meiosis-specific cohesin complex, which also contains the SMC1 (SMC1A or SMC1B) and SMC3 heterodimer. Such complex likely contains RAD21, or the meiosis-specific related protein REC8. Interacts with CCDC79/TERB1; recruiting cohesin to telomeres to develop structural rigidity (By similarity).</text>
</comment>
<comment type="subcellular location">
    <subcellularLocation>
        <location evidence="3">Nucleus</location>
    </subcellularLocation>
    <subcellularLocation>
        <location evidence="1">Chromosome</location>
    </subcellularLocation>
    <text evidence="1">Associates with chromatin. In prophase I stage of meiosis, it is found along the axial elements of synaptonemal complexes. In late-pachytene-diplotene, the bulk of protein dissociates from the chromosome arms probably because of phosphorylation by PLK1, except at centromeres, where cohesin complexes remain. It however remains chromatin associated at the centromeres up to metaphase I. During anaphase I, it probably dissociates from centromeres, allowing chromosomes segregation (By similarity).</text>
</comment>
<comment type="tissue specificity">
    <text>Testis specific.</text>
</comment>
<comment type="PTM">
    <text evidence="1">Phosphorylated.</text>
</comment>
<comment type="similarity">
    <text evidence="5">Belongs to the SCC3 family.</text>
</comment>
<dbReference type="EMBL" id="AY027880">
    <property type="protein sequence ID" value="AAK13052.1"/>
    <property type="molecule type" value="mRNA"/>
</dbReference>
<dbReference type="RefSeq" id="NP_446182.1">
    <property type="nucleotide sequence ID" value="NM_053730.2"/>
</dbReference>
<dbReference type="RefSeq" id="XP_006249082.1">
    <property type="nucleotide sequence ID" value="XM_006249020.4"/>
</dbReference>
<dbReference type="RefSeq" id="XP_038944943.1">
    <property type="nucleotide sequence ID" value="XM_039089015.2"/>
</dbReference>
<dbReference type="RefSeq" id="XP_038944944.1">
    <property type="nucleotide sequence ID" value="XM_039089016.2"/>
</dbReference>
<dbReference type="RefSeq" id="XP_038944945.1">
    <property type="nucleotide sequence ID" value="XM_039089017.2"/>
</dbReference>
<dbReference type="SMR" id="Q99M76"/>
<dbReference type="FunCoup" id="Q99M76">
    <property type="interactions" value="1292"/>
</dbReference>
<dbReference type="STRING" id="10116.ENSRNOP00000072692"/>
<dbReference type="GlyGen" id="Q99M76">
    <property type="glycosylation" value="1 site"/>
</dbReference>
<dbReference type="iPTMnet" id="Q99M76"/>
<dbReference type="PhosphoSitePlus" id="Q99M76"/>
<dbReference type="PaxDb" id="10116-ENSRNOP00000041918"/>
<dbReference type="Ensembl" id="ENSRNOT00000042006.5">
    <property type="protein sequence ID" value="ENSRNOP00000041918.4"/>
    <property type="gene ID" value="ENSRNOG00000001360.7"/>
</dbReference>
<dbReference type="GeneID" id="114522"/>
<dbReference type="KEGG" id="rno:114522"/>
<dbReference type="UCSC" id="RGD:621333">
    <property type="organism name" value="rat"/>
</dbReference>
<dbReference type="AGR" id="RGD:621333"/>
<dbReference type="CTD" id="10734"/>
<dbReference type="RGD" id="621333">
    <property type="gene designation" value="Stag3"/>
</dbReference>
<dbReference type="eggNOG" id="KOG2011">
    <property type="taxonomic scope" value="Eukaryota"/>
</dbReference>
<dbReference type="GeneTree" id="ENSGT00950000182972"/>
<dbReference type="InParanoid" id="Q99M76"/>
<dbReference type="OMA" id="QHTETHH"/>
<dbReference type="OrthoDB" id="65134at9989"/>
<dbReference type="PhylomeDB" id="Q99M76"/>
<dbReference type="PRO" id="PR:Q99M76"/>
<dbReference type="Proteomes" id="UP000002494">
    <property type="component" value="Chromosome 12"/>
</dbReference>
<dbReference type="Bgee" id="ENSRNOG00000001360">
    <property type="expression patterns" value="Expressed in testis and 2 other cell types or tissues"/>
</dbReference>
<dbReference type="GO" id="GO:0000785">
    <property type="term" value="C:chromatin"/>
    <property type="evidence" value="ECO:0000318"/>
    <property type="project" value="GO_Central"/>
</dbReference>
<dbReference type="GO" id="GO:0000794">
    <property type="term" value="C:condensed nuclear chromosome"/>
    <property type="evidence" value="ECO:0000266"/>
    <property type="project" value="RGD"/>
</dbReference>
<dbReference type="GO" id="GO:0000800">
    <property type="term" value="C:lateral element"/>
    <property type="evidence" value="ECO:0000266"/>
    <property type="project" value="RGD"/>
</dbReference>
<dbReference type="GO" id="GO:0001673">
    <property type="term" value="C:male germ cell nucleus"/>
    <property type="evidence" value="ECO:0000266"/>
    <property type="project" value="RGD"/>
</dbReference>
<dbReference type="GO" id="GO:0030893">
    <property type="term" value="C:meiotic cohesin complex"/>
    <property type="evidence" value="ECO:0000266"/>
    <property type="project" value="RGD"/>
</dbReference>
<dbReference type="GO" id="GO:0005730">
    <property type="term" value="C:nucleolus"/>
    <property type="evidence" value="ECO:0007669"/>
    <property type="project" value="Ensembl"/>
</dbReference>
<dbReference type="GO" id="GO:0005654">
    <property type="term" value="C:nucleoplasm"/>
    <property type="evidence" value="ECO:0007669"/>
    <property type="project" value="Ensembl"/>
</dbReference>
<dbReference type="GO" id="GO:0005634">
    <property type="term" value="C:nucleus"/>
    <property type="evidence" value="ECO:0000318"/>
    <property type="project" value="GO_Central"/>
</dbReference>
<dbReference type="GO" id="GO:0000795">
    <property type="term" value="C:synaptonemal complex"/>
    <property type="evidence" value="ECO:0000266"/>
    <property type="project" value="RGD"/>
</dbReference>
<dbReference type="GO" id="GO:0000802">
    <property type="term" value="C:transverse filament"/>
    <property type="evidence" value="ECO:0000266"/>
    <property type="project" value="RGD"/>
</dbReference>
<dbReference type="GO" id="GO:0003682">
    <property type="term" value="F:chromatin binding"/>
    <property type="evidence" value="ECO:0000318"/>
    <property type="project" value="GO_Central"/>
</dbReference>
<dbReference type="GO" id="GO:0034089">
    <property type="term" value="P:establishment of meiotic sister chromatid cohesion"/>
    <property type="evidence" value="ECO:0000250"/>
    <property type="project" value="UniProtKB"/>
</dbReference>
<dbReference type="GO" id="GO:0007129">
    <property type="term" value="P:homologous chromosome pairing at meiosis"/>
    <property type="evidence" value="ECO:0000266"/>
    <property type="project" value="RGD"/>
</dbReference>
<dbReference type="GO" id="GO:0051321">
    <property type="term" value="P:meiotic cell cycle"/>
    <property type="evidence" value="ECO:0000304"/>
    <property type="project" value="RGD"/>
</dbReference>
<dbReference type="GO" id="GO:0034502">
    <property type="term" value="P:protein localization to chromosome"/>
    <property type="evidence" value="ECO:0000266"/>
    <property type="project" value="RGD"/>
</dbReference>
<dbReference type="GO" id="GO:0007062">
    <property type="term" value="P:sister chromatid cohesion"/>
    <property type="evidence" value="ECO:0000318"/>
    <property type="project" value="GO_Central"/>
</dbReference>
<dbReference type="FunFam" id="1.25.10.10:FF:000449">
    <property type="entry name" value="Cohesin subunit SA-3"/>
    <property type="match status" value="1"/>
</dbReference>
<dbReference type="Gene3D" id="1.25.10.10">
    <property type="entry name" value="Leucine-rich Repeat Variant"/>
    <property type="match status" value="1"/>
</dbReference>
<dbReference type="InterPro" id="IPR011989">
    <property type="entry name" value="ARM-like"/>
</dbReference>
<dbReference type="InterPro" id="IPR016024">
    <property type="entry name" value="ARM-type_fold"/>
</dbReference>
<dbReference type="InterPro" id="IPR039662">
    <property type="entry name" value="Cohesin_Scc3/SA"/>
</dbReference>
<dbReference type="InterPro" id="IPR056396">
    <property type="entry name" value="HEAT_SCC3-SA"/>
</dbReference>
<dbReference type="InterPro" id="IPR020839">
    <property type="entry name" value="SCD"/>
</dbReference>
<dbReference type="InterPro" id="IPR013721">
    <property type="entry name" value="STAG"/>
</dbReference>
<dbReference type="PANTHER" id="PTHR11199:SF8">
    <property type="entry name" value="COHESIN SUBUNIT SA-3"/>
    <property type="match status" value="1"/>
</dbReference>
<dbReference type="PANTHER" id="PTHR11199">
    <property type="entry name" value="STROMAL ANTIGEN"/>
    <property type="match status" value="1"/>
</dbReference>
<dbReference type="Pfam" id="PF24571">
    <property type="entry name" value="HEAT_SCC3-SA"/>
    <property type="match status" value="1"/>
</dbReference>
<dbReference type="Pfam" id="PF21581">
    <property type="entry name" value="SCD"/>
    <property type="match status" value="1"/>
</dbReference>
<dbReference type="Pfam" id="PF08514">
    <property type="entry name" value="STAG"/>
    <property type="match status" value="1"/>
</dbReference>
<dbReference type="SUPFAM" id="SSF48371">
    <property type="entry name" value="ARM repeat"/>
    <property type="match status" value="1"/>
</dbReference>
<dbReference type="PROSITE" id="PS51425">
    <property type="entry name" value="SCD"/>
    <property type="match status" value="1"/>
</dbReference>
<accession>Q99M76</accession>
<feature type="chain" id="PRO_0000120190" description="Cohesin subunit SA-3">
    <location>
        <begin position="1"/>
        <end position="1256"/>
    </location>
</feature>
<feature type="domain" description="SCD" evidence="3">
    <location>
        <begin position="324"/>
        <end position="409"/>
    </location>
</feature>
<feature type="region of interest" description="Disordered" evidence="4">
    <location>
        <begin position="1"/>
        <end position="110"/>
    </location>
</feature>
<feature type="region of interest" description="Disordered" evidence="4">
    <location>
        <begin position="1096"/>
        <end position="1169"/>
    </location>
</feature>
<feature type="region of interest" description="Disordered" evidence="4">
    <location>
        <begin position="1230"/>
        <end position="1256"/>
    </location>
</feature>
<feature type="compositionally biased region" description="Low complexity" evidence="4">
    <location>
        <begin position="1"/>
        <end position="22"/>
    </location>
</feature>
<feature type="compositionally biased region" description="Basic residues" evidence="4">
    <location>
        <begin position="72"/>
        <end position="83"/>
    </location>
</feature>
<feature type="compositionally biased region" description="Polar residues" evidence="4">
    <location>
        <begin position="1113"/>
        <end position="1125"/>
    </location>
</feature>
<feature type="compositionally biased region" description="Basic residues" evidence="4">
    <location>
        <begin position="1126"/>
        <end position="1140"/>
    </location>
</feature>
<feature type="compositionally biased region" description="Pro residues" evidence="4">
    <location>
        <begin position="1144"/>
        <end position="1166"/>
    </location>
</feature>
<feature type="modified residue" description="Phosphoserine" evidence="2">
    <location>
        <position position="1234"/>
    </location>
</feature>
<keyword id="KW-0131">Cell cycle</keyword>
<keyword id="KW-0158">Chromosome</keyword>
<keyword id="KW-0159">Chromosome partition</keyword>
<keyword id="KW-0469">Meiosis</keyword>
<keyword id="KW-0539">Nucleus</keyword>
<keyword id="KW-0597">Phosphoprotein</keyword>
<keyword id="KW-1185">Reference proteome</keyword>
<proteinExistence type="evidence at transcript level"/>
<name>STAG3_RAT</name>
<protein>
    <recommendedName>
        <fullName>Cohesin subunit SA-3</fullName>
    </recommendedName>
    <alternativeName>
        <fullName>SCC3 homolog 3</fullName>
    </alternativeName>
    <alternativeName>
        <fullName>Stromal antigen 3</fullName>
    </alternativeName>
    <alternativeName>
        <fullName>Stromalin-3</fullName>
    </alternativeName>
</protein>
<sequence length="1256" mass="141951">MPTLWSPSTQHHGSSSGSMSSPLRKSVRCAQMALSPCSSNIQPCDDRDSQGTAEWDSSSTSEDSDFEDSLRRNVRKRAAKRPPKAIPVAKHPKKQSHIVPGGNDKNKSVPPTSDLFDAVKAARSCAQSLVDEWLENYKQDENAGFLELVNFFIRACGCKSTVTPEMFKTMSNSEIIQHLTEEFNEDSGDYPLTAPGPSWKKFQGSFCEFVKTLVCQCQYSLLFDGFPMDDLISLLIGLSDSQVRAFRHTSTLAAMKLMTSLVKVALQLSLHKDNNQRQYEAERNKGPEQRAPERLESLLEKRKEFQENQEEIEGMMNAIFRGVFVHRYRDILPEIRAVCIEEIGCWMQSYSTSFLNDSYLKYIGWTLHDKHKEVRLKCVKALAGLYSNQELSSRMELFTNRFKDRMVSMVMDRESEVAVEAIRLLTLILKNMEGVLTSADCEKIYSIVYISNRAMASSAGEFVYWKIFHPECGAKAVSGRERRRSPQAQRTFIYLLLAFFMESEHHDHAAYLVDSLWDCAGSYLKDWESLTSLLLQKDQNLGDMQERMLIEILVSSARQAAEGHPPVGRITGKKSLTAKERKLQAYDKVKLAEHLIPLLPQLLAKFSADAENVAPLLRLLSYFDLNIYCTQRLEKHLELLLQQLQEVVVKHVEPEVLEAAAHALYLLCKPEFTFFSRVDFARSQLVDLLTDRFQQELDDLMQSSFLDEDEVYSLTATLKRLSAFYNAHDLTRWEISEPCSRLLRKAVDTGEVPHQVILPALTLVYFSILWTVTHISESTSQKQLMSLKKRMVAFCELCQSCLSDVDPEIQEQAFVLLSDLLLIFSPQMVVGGRDFLRPLVFFPEATLQSELASFLMDHVFLQPGELGNGQSQEDHVQIELLHQRRRLLAGFCKLLLYGVLELDAASDVFKHYNKFYEDYGDIIKETLTRARQIDRCQCSRILLLSLKQLYTELIQEQGPQDLTELPAFIEMRDLARRFALSFGPQQLHNRDLVVMLHKEGIKFSLSELPPAGSSREPPNIAFLELLSEFSPRLFHQDKQLLLSYLEKCLQRVSMAPSHPWGPVTTYCHSLHLVENTAEASSQGPPHSKKRCIEVPRRLQEEESSSQGESLQLNSGPTTPTLTSTAVKRRQSPRTVGKRQKGGPGPGPGPGPGPGPGPGPGPGPGPGPELICSQQLSGTQRLKMSSAPCFQIRCDPSGSGLGKQMTRLSLMEEDEEEELRLLDEEWQCGDKLLHSPSSPSEHGLDLLDTTELNMEDF</sequence>
<organism>
    <name type="scientific">Rattus norvegicus</name>
    <name type="common">Rat</name>
    <dbReference type="NCBI Taxonomy" id="10116"/>
    <lineage>
        <taxon>Eukaryota</taxon>
        <taxon>Metazoa</taxon>
        <taxon>Chordata</taxon>
        <taxon>Craniata</taxon>
        <taxon>Vertebrata</taxon>
        <taxon>Euteleostomi</taxon>
        <taxon>Mammalia</taxon>
        <taxon>Eutheria</taxon>
        <taxon>Euarchontoglires</taxon>
        <taxon>Glires</taxon>
        <taxon>Rodentia</taxon>
        <taxon>Myomorpha</taxon>
        <taxon>Muroidea</taxon>
        <taxon>Muridae</taxon>
        <taxon>Murinae</taxon>
        <taxon>Rattus</taxon>
    </lineage>
</organism>
<evidence type="ECO:0000250" key="1"/>
<evidence type="ECO:0000250" key="2">
    <source>
        <dbReference type="UniProtKB" id="O70576"/>
    </source>
</evidence>
<evidence type="ECO:0000255" key="3">
    <source>
        <dbReference type="PROSITE-ProRule" id="PRU00750"/>
    </source>
</evidence>
<evidence type="ECO:0000256" key="4">
    <source>
        <dbReference type="SAM" id="MobiDB-lite"/>
    </source>
</evidence>
<evidence type="ECO:0000305" key="5"/>
<gene>
    <name type="primary">Stag3</name>
</gene>
<reference key="1">
    <citation type="journal article" date="2001" name="Mol. Reprod. Dev.">
        <title>Evaluation of the Stag3 gene and the synaptonemal complex in a rat model (as/as) for male infertility.</title>
        <authorList>
            <person name="Bayes M."/>
            <person name="Prieto I."/>
            <person name="Noguchi J."/>
            <person name="Barbero J.L."/>
            <person name="Perez Jurado L.A."/>
        </authorList>
    </citation>
    <scope>NUCLEOTIDE SEQUENCE [MRNA]</scope>
    <source>
        <strain>Wistar</strain>
    </source>
</reference>